<evidence type="ECO:0000250" key="1">
    <source>
        <dbReference type="UniProtKB" id="P68137"/>
    </source>
</evidence>
<evidence type="ECO:0000305" key="2"/>
<accession>P0C542</accession>
<accession>P17300</accession>
<accession>Q5N9D6</accession>
<feature type="chain" id="PRO_0000291456" description="Actin-7">
    <location>
        <begin position="1"/>
        <end position="376"/>
    </location>
</feature>
<sequence>MAEEDIQPIVCDNGTGMVKAGFAGDDAPRAVFPSIVGRPRHTGVMVGMGQKDAYVGDEAQSKRGILTLKYPIEHGIVNNWDDMEKIWHHTFYNELRVAPEEHPVLLTEAPMNPKANREKMTQIMFETFNCPAMYVAIQAVLSLYASGRTTGIVLDSGDGVSHTVPIYEGFTLPHAILRLDLAGRDLTDNLMKILTERGYSFTTTAEREIVRDIKEKLAYVALDYEQELDTARSSSSIEKSYELPDGQVITIGAERFRCPEVLFQPSFIGMEAPGIHEATYNSIMKCDVDIRKDLYGNVVLSGGSTMFPGIGDRMSKEITALAPGSMKIKVVAPPERKYSVWIGGSILASLSTFQQMWISKAEYDESGPGIVHMKCF</sequence>
<reference key="1">
    <citation type="journal article" date="1990" name="Plant Mol. Biol.">
        <title>Genomic nucleotide sequence of four rice (Oryza sativa) actin genes.</title>
        <authorList>
            <person name="Reece K.S."/>
            <person name="McElroy D."/>
            <person name="Wu R."/>
        </authorList>
    </citation>
    <scope>NUCLEOTIDE SEQUENCE [GENOMIC DNA]</scope>
    <source>
        <strain>cv. IR36</strain>
    </source>
</reference>
<reference key="2">
    <citation type="journal article" date="1990" name="Plant Mol. Biol.">
        <title>Characterization of the rice (Oryza sativa) actin gene family.</title>
        <authorList>
            <person name="McElroy D."/>
            <person name="Rothenberg M."/>
            <person name="Reece K.S."/>
            <person name="Wu R."/>
        </authorList>
    </citation>
    <scope>GENE FAMILY</scope>
</reference>
<organism>
    <name type="scientific">Oryza sativa subsp. indica</name>
    <name type="common">Rice</name>
    <dbReference type="NCBI Taxonomy" id="39946"/>
    <lineage>
        <taxon>Eukaryota</taxon>
        <taxon>Viridiplantae</taxon>
        <taxon>Streptophyta</taxon>
        <taxon>Embryophyta</taxon>
        <taxon>Tracheophyta</taxon>
        <taxon>Spermatophyta</taxon>
        <taxon>Magnoliopsida</taxon>
        <taxon>Liliopsida</taxon>
        <taxon>Poales</taxon>
        <taxon>Poaceae</taxon>
        <taxon>BOP clade</taxon>
        <taxon>Oryzoideae</taxon>
        <taxon>Oryzeae</taxon>
        <taxon>Oryzinae</taxon>
        <taxon>Oryza</taxon>
        <taxon>Oryza sativa</taxon>
    </lineage>
</organism>
<comment type="function">
    <text>Actins are highly conserved proteins that are involved in various types of cell motility and are ubiquitously expressed in all eukaryotic cells.</text>
</comment>
<comment type="function">
    <text>Essential component of cell cytoskeleton; plays an important role in cytoplasmic streaming, cell shape determination, cell division, organelle movement and extension growth.</text>
</comment>
<comment type="catalytic activity">
    <reaction evidence="1">
        <text>ATP + H2O = ADP + phosphate + H(+)</text>
        <dbReference type="Rhea" id="RHEA:13065"/>
        <dbReference type="ChEBI" id="CHEBI:15377"/>
        <dbReference type="ChEBI" id="CHEBI:15378"/>
        <dbReference type="ChEBI" id="CHEBI:30616"/>
        <dbReference type="ChEBI" id="CHEBI:43474"/>
        <dbReference type="ChEBI" id="CHEBI:456216"/>
    </reaction>
</comment>
<comment type="subcellular location">
    <subcellularLocation>
        <location>Cytoplasm</location>
        <location>Cytoskeleton</location>
    </subcellularLocation>
</comment>
<comment type="miscellaneous">
    <text>There are at least eight actin genes in rice.</text>
</comment>
<comment type="similarity">
    <text evidence="2">Belongs to the actin family.</text>
</comment>
<keyword id="KW-0067">ATP-binding</keyword>
<keyword id="KW-0963">Cytoplasm</keyword>
<keyword id="KW-0206">Cytoskeleton</keyword>
<keyword id="KW-0378">Hydrolase</keyword>
<keyword id="KW-0547">Nucleotide-binding</keyword>
<proteinExistence type="inferred from homology"/>
<name>ACT7_ORYSI</name>
<gene>
    <name type="primary">ACT7</name>
    <name type="synonym">AC7</name>
    <name type="synonym">RAC7</name>
</gene>
<protein>
    <recommendedName>
        <fullName>Actin-7</fullName>
        <ecNumber evidence="1">3.6.4.-</ecNumber>
    </recommendedName>
</protein>
<dbReference type="EC" id="3.6.4.-" evidence="1"/>
<dbReference type="EMBL" id="X15863">
    <property type="protein sequence ID" value="CAA33872.1"/>
    <property type="molecule type" value="Genomic_DNA"/>
</dbReference>
<dbReference type="PIR" id="S10023">
    <property type="entry name" value="ATRZ7"/>
</dbReference>
<dbReference type="SMR" id="P0C542"/>
<dbReference type="EnsemblPlants" id="OsGoSa_01g0040650.01">
    <property type="protein sequence ID" value="OsGoSa_01g0040650.01"/>
    <property type="gene ID" value="OsGoSa_01g0040650"/>
</dbReference>
<dbReference type="EnsemblPlants" id="OsIR64_01g0040090.01">
    <property type="protein sequence ID" value="OsIR64_01g0040090.01"/>
    <property type="gene ID" value="OsIR64_01g0040090"/>
</dbReference>
<dbReference type="EnsemblPlants" id="OsKYG_01g0040400.01">
    <property type="protein sequence ID" value="OsKYG_01g0040400.01"/>
    <property type="gene ID" value="OsKYG_01g0040400"/>
</dbReference>
<dbReference type="EnsemblPlants" id="OsLaMu_01g0040460.01">
    <property type="protein sequence ID" value="OsLaMu_01g0040460.01"/>
    <property type="gene ID" value="OsLaMu_01g0040460"/>
</dbReference>
<dbReference type="EnsemblPlants" id="OsLima_01g0040430.01">
    <property type="protein sequence ID" value="OsLima_01g0040430.01"/>
    <property type="gene ID" value="OsLima_01g0040430"/>
</dbReference>
<dbReference type="EnsemblPlants" id="OsLiXu_01g0040600.01">
    <property type="protein sequence ID" value="OsLiXu_01g0040600.01"/>
    <property type="gene ID" value="OsLiXu_01g0040600"/>
</dbReference>
<dbReference type="EnsemblPlants" id="OsLiXu_01g0040600.02">
    <property type="protein sequence ID" value="OsLiXu_01g0040600.02"/>
    <property type="gene ID" value="OsLiXu_01g0040600"/>
</dbReference>
<dbReference type="EnsemblPlants" id="OsMH63_01G041270_01">
    <property type="protein sequence ID" value="OsMH63_01G041270_01"/>
    <property type="gene ID" value="OsMH63_01G041270"/>
</dbReference>
<dbReference type="EnsemblPlants" id="OsMH63_01G041270_02">
    <property type="protein sequence ID" value="OsMH63_01G041270_02"/>
    <property type="gene ID" value="OsMH63_01G041270"/>
</dbReference>
<dbReference type="EnsemblPlants" id="OsPr106_01g0040420.01">
    <property type="protein sequence ID" value="OsPr106_01g0040420.01"/>
    <property type="gene ID" value="OsPr106_01g0040420"/>
</dbReference>
<dbReference type="EnsemblPlants" id="OsZS97_01G040610_01">
    <property type="protein sequence ID" value="OsZS97_01G040610_01"/>
    <property type="gene ID" value="OsZS97_01G040610"/>
</dbReference>
<dbReference type="Gramene" id="OsGoSa_01g0040650.01">
    <property type="protein sequence ID" value="OsGoSa_01g0040650.01"/>
    <property type="gene ID" value="OsGoSa_01g0040650"/>
</dbReference>
<dbReference type="Gramene" id="OsIR64_01g0040090.01">
    <property type="protein sequence ID" value="OsIR64_01g0040090.01"/>
    <property type="gene ID" value="OsIR64_01g0040090"/>
</dbReference>
<dbReference type="Gramene" id="OsKYG_01g0040400.01">
    <property type="protein sequence ID" value="OsKYG_01g0040400.01"/>
    <property type="gene ID" value="OsKYG_01g0040400"/>
</dbReference>
<dbReference type="Gramene" id="OsLaMu_01g0040460.01">
    <property type="protein sequence ID" value="OsLaMu_01g0040460.01"/>
    <property type="gene ID" value="OsLaMu_01g0040460"/>
</dbReference>
<dbReference type="Gramene" id="OsLima_01g0040430.01">
    <property type="protein sequence ID" value="OsLima_01g0040430.01"/>
    <property type="gene ID" value="OsLima_01g0040430"/>
</dbReference>
<dbReference type="Gramene" id="OsLiXu_01g0040600.01">
    <property type="protein sequence ID" value="OsLiXu_01g0040600.01"/>
    <property type="gene ID" value="OsLiXu_01g0040600"/>
</dbReference>
<dbReference type="Gramene" id="OsLiXu_01g0040600.02">
    <property type="protein sequence ID" value="OsLiXu_01g0040600.02"/>
    <property type="gene ID" value="OsLiXu_01g0040600"/>
</dbReference>
<dbReference type="Gramene" id="OsMH63_01G041270_01">
    <property type="protein sequence ID" value="OsMH63_01G041270_01"/>
    <property type="gene ID" value="OsMH63_01G041270"/>
</dbReference>
<dbReference type="Gramene" id="OsMH63_01G041270_02">
    <property type="protein sequence ID" value="OsMH63_01G041270_02"/>
    <property type="gene ID" value="OsMH63_01G041270"/>
</dbReference>
<dbReference type="Gramene" id="OsPr106_01g0040420.01">
    <property type="protein sequence ID" value="OsPr106_01g0040420.01"/>
    <property type="gene ID" value="OsPr106_01g0040420"/>
</dbReference>
<dbReference type="Gramene" id="OsZS97_01G040610_01">
    <property type="protein sequence ID" value="OsZS97_01G040610_01"/>
    <property type="gene ID" value="OsZS97_01G040610"/>
</dbReference>
<dbReference type="OrthoDB" id="2011723at2759"/>
<dbReference type="GO" id="GO:0005737">
    <property type="term" value="C:cytoplasm"/>
    <property type="evidence" value="ECO:0007669"/>
    <property type="project" value="UniProtKB-KW"/>
</dbReference>
<dbReference type="GO" id="GO:0005856">
    <property type="term" value="C:cytoskeleton"/>
    <property type="evidence" value="ECO:0007669"/>
    <property type="project" value="UniProtKB-SubCell"/>
</dbReference>
<dbReference type="GO" id="GO:0005524">
    <property type="term" value="F:ATP binding"/>
    <property type="evidence" value="ECO:0007669"/>
    <property type="project" value="UniProtKB-KW"/>
</dbReference>
<dbReference type="GO" id="GO:0016787">
    <property type="term" value="F:hydrolase activity"/>
    <property type="evidence" value="ECO:0007669"/>
    <property type="project" value="UniProtKB-KW"/>
</dbReference>
<dbReference type="CDD" id="cd10224">
    <property type="entry name" value="ASKHA_NBD_actin"/>
    <property type="match status" value="1"/>
</dbReference>
<dbReference type="FunFam" id="2.30.36.70:FF:000001">
    <property type="entry name" value="Actin, alpha skeletal muscle"/>
    <property type="match status" value="1"/>
</dbReference>
<dbReference type="FunFam" id="3.30.420.40:FF:000050">
    <property type="entry name" value="Actin, alpha skeletal muscle"/>
    <property type="match status" value="1"/>
</dbReference>
<dbReference type="FunFam" id="3.30.420.40:FF:000205">
    <property type="entry name" value="Actin, alpha skeletal muscle"/>
    <property type="match status" value="1"/>
</dbReference>
<dbReference type="FunFam" id="3.30.420.40:FF:000291">
    <property type="entry name" value="Actin, alpha skeletal muscle"/>
    <property type="match status" value="1"/>
</dbReference>
<dbReference type="FunFam" id="3.90.640.10:FF:000001">
    <property type="entry name" value="Actin, muscle"/>
    <property type="match status" value="1"/>
</dbReference>
<dbReference type="Gene3D" id="3.30.420.40">
    <property type="match status" value="2"/>
</dbReference>
<dbReference type="Gene3D" id="3.90.640.10">
    <property type="entry name" value="Actin, Chain A, domain 4"/>
    <property type="match status" value="1"/>
</dbReference>
<dbReference type="InterPro" id="IPR004000">
    <property type="entry name" value="Actin"/>
</dbReference>
<dbReference type="InterPro" id="IPR020902">
    <property type="entry name" value="Actin/actin-like_CS"/>
</dbReference>
<dbReference type="InterPro" id="IPR004001">
    <property type="entry name" value="Actin_CS"/>
</dbReference>
<dbReference type="InterPro" id="IPR043129">
    <property type="entry name" value="ATPase_NBD"/>
</dbReference>
<dbReference type="PANTHER" id="PTHR11937">
    <property type="entry name" value="ACTIN"/>
    <property type="match status" value="1"/>
</dbReference>
<dbReference type="Pfam" id="PF00022">
    <property type="entry name" value="Actin"/>
    <property type="match status" value="1"/>
</dbReference>
<dbReference type="PRINTS" id="PR00190">
    <property type="entry name" value="ACTIN"/>
</dbReference>
<dbReference type="SMART" id="SM00268">
    <property type="entry name" value="ACTIN"/>
    <property type="match status" value="1"/>
</dbReference>
<dbReference type="SUPFAM" id="SSF53067">
    <property type="entry name" value="Actin-like ATPase domain"/>
    <property type="match status" value="2"/>
</dbReference>
<dbReference type="PROSITE" id="PS00406">
    <property type="entry name" value="ACTINS_1"/>
    <property type="match status" value="1"/>
</dbReference>
<dbReference type="PROSITE" id="PS00432">
    <property type="entry name" value="ACTINS_2"/>
    <property type="match status" value="1"/>
</dbReference>
<dbReference type="PROSITE" id="PS01132">
    <property type="entry name" value="ACTINS_ACT_LIKE"/>
    <property type="match status" value="1"/>
</dbReference>